<protein>
    <recommendedName>
        <fullName evidence="1">ATP synthase epsilon chain, chloroplastic</fullName>
    </recommendedName>
    <alternativeName>
        <fullName evidence="1">ATP synthase F1 sector epsilon subunit</fullName>
    </alternativeName>
    <alternativeName>
        <fullName evidence="1">F-ATPase epsilon subunit</fullName>
    </alternativeName>
</protein>
<reference key="1">
    <citation type="journal article" date="1983" name="Gene">
        <title>Overlap and cotranscription of the genes for the beta and epsilon subunits of tobacco chloroplast ATPase.</title>
        <authorList>
            <person name="Shinozaki K."/>
            <person name="Deno H."/>
            <person name="Kato A."/>
            <person name="Sugiura M."/>
        </authorList>
    </citation>
    <scope>NUCLEOTIDE SEQUENCE [GENOMIC DNA]</scope>
</reference>
<reference key="2">
    <citation type="journal article" date="1986" name="EMBO J.">
        <title>The complete nucleotide sequence of the tobacco chloroplast genome: its gene organization and expression.</title>
        <authorList>
            <person name="Shinozaki K."/>
            <person name="Ohme M."/>
            <person name="Tanaka M."/>
            <person name="Wakasugi T."/>
            <person name="Hayashida N."/>
            <person name="Matsubayashi T."/>
            <person name="Zaita N."/>
            <person name="Chunwongse J."/>
            <person name="Obokata J."/>
            <person name="Yamaguchi-Shinozaki K."/>
            <person name="Ohto C."/>
            <person name="Torazawa K."/>
            <person name="Meng B.-Y."/>
            <person name="Sugita M."/>
            <person name="Deno H."/>
            <person name="Kamogashira T."/>
            <person name="Yamada K."/>
            <person name="Kusuda J."/>
            <person name="Takaiwa F."/>
            <person name="Kato A."/>
            <person name="Tohdoh N."/>
            <person name="Shimada H."/>
            <person name="Sugiura M."/>
        </authorList>
    </citation>
    <scope>NUCLEOTIDE SEQUENCE [LARGE SCALE GENOMIC DNA]</scope>
    <source>
        <strain>cv. Bright Yellow 4</strain>
    </source>
</reference>
<comment type="function">
    <text evidence="1">Produces ATP from ADP in the presence of a proton gradient across the membrane.</text>
</comment>
<comment type="subunit">
    <text evidence="1">F-type ATPases have 2 components, CF(1) - the catalytic core - and CF(0) - the membrane proton channel. CF(1) has five subunits: alpha(3), beta(3), gamma(1), delta(1), epsilon(1). CF(0) has three main subunits: a, b and c.</text>
</comment>
<comment type="subcellular location">
    <subcellularLocation>
        <location evidence="1">Plastid</location>
        <location evidence="1">Chloroplast thylakoid membrane</location>
        <topology evidence="1">Peripheral membrane protein</topology>
    </subcellularLocation>
</comment>
<comment type="similarity">
    <text evidence="1">Belongs to the ATPase epsilon chain family.</text>
</comment>
<proteinExistence type="inferred from homology"/>
<name>ATPE_TOBAC</name>
<accession>P00834</accession>
<keyword id="KW-0066">ATP synthesis</keyword>
<keyword id="KW-0139">CF(1)</keyword>
<keyword id="KW-0150">Chloroplast</keyword>
<keyword id="KW-0375">Hydrogen ion transport</keyword>
<keyword id="KW-0406">Ion transport</keyword>
<keyword id="KW-0472">Membrane</keyword>
<keyword id="KW-0934">Plastid</keyword>
<keyword id="KW-1185">Reference proteome</keyword>
<keyword id="KW-0793">Thylakoid</keyword>
<keyword id="KW-0813">Transport</keyword>
<evidence type="ECO:0000255" key="1">
    <source>
        <dbReference type="HAMAP-Rule" id="MF_00530"/>
    </source>
</evidence>
<sequence>MTLNLSVLTPNRIVWDSEVEEIVLSTNSGQIGILPNHAPIATAVDIGILRIRLNDQWLTMALMGGFARIGNNEITVLVNDAEKGSDIDPQEAQQTLELAEANVKKAEGRRQKIEANLALRRARTRVEAINPIS</sequence>
<geneLocation type="chloroplast"/>
<dbReference type="EMBL" id="K00507">
    <property type="protein sequence ID" value="AAA84677.1"/>
    <property type="molecule type" value="Genomic_DNA"/>
</dbReference>
<dbReference type="EMBL" id="Z00044">
    <property type="protein sequence ID" value="CAA77359.1"/>
    <property type="molecule type" value="Genomic_DNA"/>
</dbReference>
<dbReference type="PIR" id="A01035">
    <property type="entry name" value="PWNTE"/>
</dbReference>
<dbReference type="RefSeq" id="NP_054505.1">
    <property type="nucleotide sequence ID" value="NC_001879.2"/>
</dbReference>
<dbReference type="SMR" id="P00834"/>
<dbReference type="GeneID" id="800472"/>
<dbReference type="KEGG" id="nta:800472"/>
<dbReference type="OMA" id="MTVHCDI"/>
<dbReference type="OrthoDB" id="423436at2759"/>
<dbReference type="Proteomes" id="UP000084051">
    <property type="component" value="Unplaced"/>
</dbReference>
<dbReference type="GO" id="GO:0009535">
    <property type="term" value="C:chloroplast thylakoid membrane"/>
    <property type="evidence" value="ECO:0007669"/>
    <property type="project" value="UniProtKB-SubCell"/>
</dbReference>
<dbReference type="GO" id="GO:0045259">
    <property type="term" value="C:proton-transporting ATP synthase complex"/>
    <property type="evidence" value="ECO:0007669"/>
    <property type="project" value="UniProtKB-KW"/>
</dbReference>
<dbReference type="GO" id="GO:0005524">
    <property type="term" value="F:ATP binding"/>
    <property type="evidence" value="ECO:0007669"/>
    <property type="project" value="UniProtKB-UniRule"/>
</dbReference>
<dbReference type="GO" id="GO:0046933">
    <property type="term" value="F:proton-transporting ATP synthase activity, rotational mechanism"/>
    <property type="evidence" value="ECO:0007669"/>
    <property type="project" value="UniProtKB-UniRule"/>
</dbReference>
<dbReference type="CDD" id="cd12152">
    <property type="entry name" value="F1-ATPase_delta"/>
    <property type="match status" value="1"/>
</dbReference>
<dbReference type="FunFam" id="2.60.15.10:FF:000002">
    <property type="entry name" value="ATP synthase epsilon chain, chloroplastic"/>
    <property type="match status" value="1"/>
</dbReference>
<dbReference type="Gene3D" id="6.10.140.480">
    <property type="match status" value="1"/>
</dbReference>
<dbReference type="Gene3D" id="2.60.15.10">
    <property type="entry name" value="F0F1 ATP synthase delta/epsilon subunit, N-terminal"/>
    <property type="match status" value="1"/>
</dbReference>
<dbReference type="HAMAP" id="MF_00530">
    <property type="entry name" value="ATP_synth_epsil_bac"/>
    <property type="match status" value="1"/>
</dbReference>
<dbReference type="InterPro" id="IPR001469">
    <property type="entry name" value="ATP_synth_F1_dsu/esu"/>
</dbReference>
<dbReference type="InterPro" id="IPR020546">
    <property type="entry name" value="ATP_synth_F1_dsu/esu_N"/>
</dbReference>
<dbReference type="InterPro" id="IPR020547">
    <property type="entry name" value="ATP_synth_F1_esu_C"/>
</dbReference>
<dbReference type="InterPro" id="IPR036771">
    <property type="entry name" value="ATPsynth_dsu/esu_N"/>
</dbReference>
<dbReference type="NCBIfam" id="TIGR01216">
    <property type="entry name" value="ATP_synt_epsi"/>
    <property type="match status" value="1"/>
</dbReference>
<dbReference type="PANTHER" id="PTHR13822">
    <property type="entry name" value="ATP SYNTHASE DELTA/EPSILON CHAIN"/>
    <property type="match status" value="1"/>
</dbReference>
<dbReference type="PANTHER" id="PTHR13822:SF10">
    <property type="entry name" value="ATP SYNTHASE EPSILON CHAIN, CHLOROPLASTIC"/>
    <property type="match status" value="1"/>
</dbReference>
<dbReference type="Pfam" id="PF00401">
    <property type="entry name" value="ATP-synt_DE"/>
    <property type="match status" value="1"/>
</dbReference>
<dbReference type="Pfam" id="PF02823">
    <property type="entry name" value="ATP-synt_DE_N"/>
    <property type="match status" value="1"/>
</dbReference>
<dbReference type="SUPFAM" id="SSF51344">
    <property type="entry name" value="Epsilon subunit of F1F0-ATP synthase N-terminal domain"/>
    <property type="match status" value="1"/>
</dbReference>
<gene>
    <name evidence="1" type="primary">atpE</name>
</gene>
<organism>
    <name type="scientific">Nicotiana tabacum</name>
    <name type="common">Common tobacco</name>
    <dbReference type="NCBI Taxonomy" id="4097"/>
    <lineage>
        <taxon>Eukaryota</taxon>
        <taxon>Viridiplantae</taxon>
        <taxon>Streptophyta</taxon>
        <taxon>Embryophyta</taxon>
        <taxon>Tracheophyta</taxon>
        <taxon>Spermatophyta</taxon>
        <taxon>Magnoliopsida</taxon>
        <taxon>eudicotyledons</taxon>
        <taxon>Gunneridae</taxon>
        <taxon>Pentapetalae</taxon>
        <taxon>asterids</taxon>
        <taxon>lamiids</taxon>
        <taxon>Solanales</taxon>
        <taxon>Solanaceae</taxon>
        <taxon>Nicotianoideae</taxon>
        <taxon>Nicotianeae</taxon>
        <taxon>Nicotiana</taxon>
    </lineage>
</organism>
<feature type="chain" id="PRO_0000188295" description="ATP synthase epsilon chain, chloroplastic">
    <location>
        <begin position="1"/>
        <end position="133"/>
    </location>
</feature>